<organism>
    <name type="scientific">Salmonella dublin (strain CT_02021853)</name>
    <dbReference type="NCBI Taxonomy" id="439851"/>
    <lineage>
        <taxon>Bacteria</taxon>
        <taxon>Pseudomonadati</taxon>
        <taxon>Pseudomonadota</taxon>
        <taxon>Gammaproteobacteria</taxon>
        <taxon>Enterobacterales</taxon>
        <taxon>Enterobacteriaceae</taxon>
        <taxon>Salmonella</taxon>
    </lineage>
</organism>
<proteinExistence type="inferred from homology"/>
<name>RL5_SALDC</name>
<feature type="chain" id="PRO_1000142443" description="Large ribosomal subunit protein uL5">
    <location>
        <begin position="1"/>
        <end position="179"/>
    </location>
</feature>
<keyword id="KW-0687">Ribonucleoprotein</keyword>
<keyword id="KW-0689">Ribosomal protein</keyword>
<keyword id="KW-0694">RNA-binding</keyword>
<keyword id="KW-0699">rRNA-binding</keyword>
<keyword id="KW-0820">tRNA-binding</keyword>
<reference key="1">
    <citation type="journal article" date="2011" name="J. Bacteriol.">
        <title>Comparative genomics of 28 Salmonella enterica isolates: evidence for CRISPR-mediated adaptive sublineage evolution.</title>
        <authorList>
            <person name="Fricke W.F."/>
            <person name="Mammel M.K."/>
            <person name="McDermott P.F."/>
            <person name="Tartera C."/>
            <person name="White D.G."/>
            <person name="Leclerc J.E."/>
            <person name="Ravel J."/>
            <person name="Cebula T.A."/>
        </authorList>
    </citation>
    <scope>NUCLEOTIDE SEQUENCE [LARGE SCALE GENOMIC DNA]</scope>
    <source>
        <strain>CT_02021853</strain>
    </source>
</reference>
<gene>
    <name evidence="1" type="primary">rplE</name>
    <name type="ordered locus">SeD_A3795</name>
</gene>
<comment type="function">
    <text evidence="1">This is one of the proteins that bind and probably mediate the attachment of the 5S RNA into the large ribosomal subunit, where it forms part of the central protuberance. In the 70S ribosome it contacts protein S13 of the 30S subunit (bridge B1b), connecting the 2 subunits; this bridge is implicated in subunit movement. Contacts the P site tRNA; the 5S rRNA and some of its associated proteins might help stabilize positioning of ribosome-bound tRNAs.</text>
</comment>
<comment type="subunit">
    <text evidence="1">Part of the 50S ribosomal subunit; part of the 5S rRNA/L5/L18/L25 subcomplex. Contacts the 5S rRNA and the P site tRNA. Forms a bridge to the 30S subunit in the 70S ribosome.</text>
</comment>
<comment type="similarity">
    <text evidence="1">Belongs to the universal ribosomal protein uL5 family.</text>
</comment>
<dbReference type="EMBL" id="CP001144">
    <property type="protein sequence ID" value="ACH76208.1"/>
    <property type="molecule type" value="Genomic_DNA"/>
</dbReference>
<dbReference type="RefSeq" id="WP_001096206.1">
    <property type="nucleotide sequence ID" value="NC_011205.1"/>
</dbReference>
<dbReference type="SMR" id="B5FJK2"/>
<dbReference type="GeneID" id="93751944"/>
<dbReference type="KEGG" id="sed:SeD_A3795"/>
<dbReference type="HOGENOM" id="CLU_061015_2_1_6"/>
<dbReference type="Proteomes" id="UP000008322">
    <property type="component" value="Chromosome"/>
</dbReference>
<dbReference type="GO" id="GO:1990904">
    <property type="term" value="C:ribonucleoprotein complex"/>
    <property type="evidence" value="ECO:0007669"/>
    <property type="project" value="UniProtKB-KW"/>
</dbReference>
<dbReference type="GO" id="GO:0005840">
    <property type="term" value="C:ribosome"/>
    <property type="evidence" value="ECO:0007669"/>
    <property type="project" value="UniProtKB-KW"/>
</dbReference>
<dbReference type="GO" id="GO:0019843">
    <property type="term" value="F:rRNA binding"/>
    <property type="evidence" value="ECO:0007669"/>
    <property type="project" value="UniProtKB-UniRule"/>
</dbReference>
<dbReference type="GO" id="GO:0003735">
    <property type="term" value="F:structural constituent of ribosome"/>
    <property type="evidence" value="ECO:0007669"/>
    <property type="project" value="InterPro"/>
</dbReference>
<dbReference type="GO" id="GO:0000049">
    <property type="term" value="F:tRNA binding"/>
    <property type="evidence" value="ECO:0007669"/>
    <property type="project" value="UniProtKB-UniRule"/>
</dbReference>
<dbReference type="GO" id="GO:0006412">
    <property type="term" value="P:translation"/>
    <property type="evidence" value="ECO:0007669"/>
    <property type="project" value="UniProtKB-UniRule"/>
</dbReference>
<dbReference type="FunFam" id="3.30.1440.10:FF:000001">
    <property type="entry name" value="50S ribosomal protein L5"/>
    <property type="match status" value="1"/>
</dbReference>
<dbReference type="Gene3D" id="3.30.1440.10">
    <property type="match status" value="1"/>
</dbReference>
<dbReference type="HAMAP" id="MF_01333_B">
    <property type="entry name" value="Ribosomal_uL5_B"/>
    <property type="match status" value="1"/>
</dbReference>
<dbReference type="InterPro" id="IPR002132">
    <property type="entry name" value="Ribosomal_uL5"/>
</dbReference>
<dbReference type="InterPro" id="IPR020930">
    <property type="entry name" value="Ribosomal_uL5_bac-type"/>
</dbReference>
<dbReference type="InterPro" id="IPR031309">
    <property type="entry name" value="Ribosomal_uL5_C"/>
</dbReference>
<dbReference type="InterPro" id="IPR020929">
    <property type="entry name" value="Ribosomal_uL5_CS"/>
</dbReference>
<dbReference type="InterPro" id="IPR022803">
    <property type="entry name" value="Ribosomal_uL5_dom_sf"/>
</dbReference>
<dbReference type="InterPro" id="IPR031310">
    <property type="entry name" value="Ribosomal_uL5_N"/>
</dbReference>
<dbReference type="NCBIfam" id="NF000585">
    <property type="entry name" value="PRK00010.1"/>
    <property type="match status" value="1"/>
</dbReference>
<dbReference type="PANTHER" id="PTHR11994">
    <property type="entry name" value="60S RIBOSOMAL PROTEIN L11-RELATED"/>
    <property type="match status" value="1"/>
</dbReference>
<dbReference type="Pfam" id="PF00281">
    <property type="entry name" value="Ribosomal_L5"/>
    <property type="match status" value="1"/>
</dbReference>
<dbReference type="Pfam" id="PF00673">
    <property type="entry name" value="Ribosomal_L5_C"/>
    <property type="match status" value="1"/>
</dbReference>
<dbReference type="PIRSF" id="PIRSF002161">
    <property type="entry name" value="Ribosomal_L5"/>
    <property type="match status" value="1"/>
</dbReference>
<dbReference type="SUPFAM" id="SSF55282">
    <property type="entry name" value="RL5-like"/>
    <property type="match status" value="1"/>
</dbReference>
<dbReference type="PROSITE" id="PS00358">
    <property type="entry name" value="RIBOSOMAL_L5"/>
    <property type="match status" value="1"/>
</dbReference>
<evidence type="ECO:0000255" key="1">
    <source>
        <dbReference type="HAMAP-Rule" id="MF_01333"/>
    </source>
</evidence>
<evidence type="ECO:0000305" key="2"/>
<accession>B5FJK2</accession>
<protein>
    <recommendedName>
        <fullName evidence="1">Large ribosomal subunit protein uL5</fullName>
    </recommendedName>
    <alternativeName>
        <fullName evidence="2">50S ribosomal protein L5</fullName>
    </alternativeName>
</protein>
<sequence>MAKLHDYYKDEVVNKLMTEFNYNSVMQVPRVEKITLNMGVGEAIADKKLLDNAAADLTAISGQKPLITKARKSVAGFKIRQGYPIGCKVTLRGERMWEFFERLITIAVPRIRDFRGLSAKSFDGRGNYSMGVREQIIFPEIDYDKVDRVRGLDITITTTAKSDEEGRALLAAFDFPFRK</sequence>